<gene>
    <name evidence="1" type="primary">rsmA</name>
    <name evidence="1" type="synonym">ksgA</name>
    <name type="ordered locus">BCAH187_A0050</name>
</gene>
<protein>
    <recommendedName>
        <fullName evidence="1">Ribosomal RNA small subunit methyltransferase A</fullName>
        <ecNumber evidence="1">2.1.1.182</ecNumber>
    </recommendedName>
    <alternativeName>
        <fullName evidence="1">16S rRNA (adenine(1518)-N(6)/adenine(1519)-N(6))-dimethyltransferase</fullName>
    </alternativeName>
    <alternativeName>
        <fullName evidence="1">16S rRNA dimethyladenosine transferase</fullName>
    </alternativeName>
    <alternativeName>
        <fullName evidence="1">16S rRNA dimethylase</fullName>
    </alternativeName>
    <alternativeName>
        <fullName evidence="1">S-adenosylmethionine-6-N', N'-adenosyl(rRNA) dimethyltransferase</fullName>
    </alternativeName>
</protein>
<proteinExistence type="inferred from homology"/>
<name>RSMA_BACC7</name>
<comment type="function">
    <text evidence="1">Specifically dimethylates two adjacent adenosines (A1518 and A1519) in the loop of a conserved hairpin near the 3'-end of 16S rRNA in the 30S particle. May play a critical role in biogenesis of 30S subunits.</text>
</comment>
<comment type="catalytic activity">
    <reaction evidence="1">
        <text>adenosine(1518)/adenosine(1519) in 16S rRNA + 4 S-adenosyl-L-methionine = N(6)-dimethyladenosine(1518)/N(6)-dimethyladenosine(1519) in 16S rRNA + 4 S-adenosyl-L-homocysteine + 4 H(+)</text>
        <dbReference type="Rhea" id="RHEA:19609"/>
        <dbReference type="Rhea" id="RHEA-COMP:10232"/>
        <dbReference type="Rhea" id="RHEA-COMP:10233"/>
        <dbReference type="ChEBI" id="CHEBI:15378"/>
        <dbReference type="ChEBI" id="CHEBI:57856"/>
        <dbReference type="ChEBI" id="CHEBI:59789"/>
        <dbReference type="ChEBI" id="CHEBI:74411"/>
        <dbReference type="ChEBI" id="CHEBI:74493"/>
        <dbReference type="EC" id="2.1.1.182"/>
    </reaction>
</comment>
<comment type="subcellular location">
    <subcellularLocation>
        <location evidence="1">Cytoplasm</location>
    </subcellularLocation>
</comment>
<comment type="similarity">
    <text evidence="1">Belongs to the class I-like SAM-binding methyltransferase superfamily. rRNA adenine N(6)-methyltransferase family. RsmA subfamily.</text>
</comment>
<organism>
    <name type="scientific">Bacillus cereus (strain AH187)</name>
    <dbReference type="NCBI Taxonomy" id="405534"/>
    <lineage>
        <taxon>Bacteria</taxon>
        <taxon>Bacillati</taxon>
        <taxon>Bacillota</taxon>
        <taxon>Bacilli</taxon>
        <taxon>Bacillales</taxon>
        <taxon>Bacillaceae</taxon>
        <taxon>Bacillus</taxon>
        <taxon>Bacillus cereus group</taxon>
    </lineage>
</organism>
<evidence type="ECO:0000255" key="1">
    <source>
        <dbReference type="HAMAP-Rule" id="MF_00607"/>
    </source>
</evidence>
<sequence>MKDIATPNRTKDIVEKYGFSFKKSLGQNFLIDTNVLNRIVDHAEIGSESGAIEIGPGIGALTEQLAKRAKKVVAFEIDQRLLPILDETLAPYGNVTVINKDVLKADVHEVFSEQFEEGQDVMVVANLPYYITTPILFKLLEEKLPVRGFVVMMQKEVGDRLAAKPGTKEYGSLSIAIQYYTEVETVMTVPRTVFVPQPNVDSAIIRLLKRPKPVVEVTDETFFFEVVRASFAQRRKTLMNNLSNNLNGFPKDKELLDRILTEVGIDPKRRGETLSIEEFATLSNALVLHKLS</sequence>
<feature type="chain" id="PRO_1000130244" description="Ribosomal RNA small subunit methyltransferase A">
    <location>
        <begin position="1"/>
        <end position="292"/>
    </location>
</feature>
<feature type="binding site" evidence="1">
    <location>
        <position position="28"/>
    </location>
    <ligand>
        <name>S-adenosyl-L-methionine</name>
        <dbReference type="ChEBI" id="CHEBI:59789"/>
    </ligand>
</feature>
<feature type="binding site" evidence="1">
    <location>
        <position position="30"/>
    </location>
    <ligand>
        <name>S-adenosyl-L-methionine</name>
        <dbReference type="ChEBI" id="CHEBI:59789"/>
    </ligand>
</feature>
<feature type="binding site" evidence="1">
    <location>
        <position position="55"/>
    </location>
    <ligand>
        <name>S-adenosyl-L-methionine</name>
        <dbReference type="ChEBI" id="CHEBI:59789"/>
    </ligand>
</feature>
<feature type="binding site" evidence="1">
    <location>
        <position position="76"/>
    </location>
    <ligand>
        <name>S-adenosyl-L-methionine</name>
        <dbReference type="ChEBI" id="CHEBI:59789"/>
    </ligand>
</feature>
<feature type="binding site" evidence="1">
    <location>
        <position position="101"/>
    </location>
    <ligand>
        <name>S-adenosyl-L-methionine</name>
        <dbReference type="ChEBI" id="CHEBI:59789"/>
    </ligand>
</feature>
<feature type="binding site" evidence="1">
    <location>
        <position position="126"/>
    </location>
    <ligand>
        <name>S-adenosyl-L-methionine</name>
        <dbReference type="ChEBI" id="CHEBI:59789"/>
    </ligand>
</feature>
<reference key="1">
    <citation type="submission" date="2008-10" db="EMBL/GenBank/DDBJ databases">
        <title>Genome sequence of Bacillus cereus AH187.</title>
        <authorList>
            <person name="Dodson R.J."/>
            <person name="Durkin A.S."/>
            <person name="Rosovitz M.J."/>
            <person name="Rasko D.A."/>
            <person name="Kolsto A.B."/>
            <person name="Okstad O.A."/>
            <person name="Ravel J."/>
            <person name="Sutton G."/>
        </authorList>
    </citation>
    <scope>NUCLEOTIDE SEQUENCE [LARGE SCALE GENOMIC DNA]</scope>
    <source>
        <strain>AH187</strain>
    </source>
</reference>
<keyword id="KW-0963">Cytoplasm</keyword>
<keyword id="KW-0489">Methyltransferase</keyword>
<keyword id="KW-0694">RNA-binding</keyword>
<keyword id="KW-0698">rRNA processing</keyword>
<keyword id="KW-0949">S-adenosyl-L-methionine</keyword>
<keyword id="KW-0808">Transferase</keyword>
<accession>B7HPV2</accession>
<dbReference type="EC" id="2.1.1.182" evidence="1"/>
<dbReference type="EMBL" id="CP001177">
    <property type="protein sequence ID" value="ACJ80038.1"/>
    <property type="molecule type" value="Genomic_DNA"/>
</dbReference>
<dbReference type="SMR" id="B7HPV2"/>
<dbReference type="KEGG" id="bcr:BCAH187_A0050"/>
<dbReference type="HOGENOM" id="CLU_041220_0_0_9"/>
<dbReference type="Proteomes" id="UP000002214">
    <property type="component" value="Chromosome"/>
</dbReference>
<dbReference type="GO" id="GO:0005829">
    <property type="term" value="C:cytosol"/>
    <property type="evidence" value="ECO:0007669"/>
    <property type="project" value="TreeGrafter"/>
</dbReference>
<dbReference type="GO" id="GO:0052908">
    <property type="term" value="F:16S rRNA (adenine(1518)-N(6)/adenine(1519)-N(6))-dimethyltransferase activity"/>
    <property type="evidence" value="ECO:0007669"/>
    <property type="project" value="UniProtKB-EC"/>
</dbReference>
<dbReference type="GO" id="GO:0003723">
    <property type="term" value="F:RNA binding"/>
    <property type="evidence" value="ECO:0007669"/>
    <property type="project" value="UniProtKB-KW"/>
</dbReference>
<dbReference type="CDD" id="cd02440">
    <property type="entry name" value="AdoMet_MTases"/>
    <property type="match status" value="1"/>
</dbReference>
<dbReference type="FunFam" id="1.10.8.100:FF:000002">
    <property type="entry name" value="Ribosomal RNA small subunit methyltransferase A"/>
    <property type="match status" value="1"/>
</dbReference>
<dbReference type="FunFam" id="3.40.50.150:FF:000023">
    <property type="entry name" value="Ribosomal RNA small subunit methyltransferase A"/>
    <property type="match status" value="1"/>
</dbReference>
<dbReference type="Gene3D" id="1.10.8.100">
    <property type="entry name" value="Ribosomal RNA adenine dimethylase-like, domain 2"/>
    <property type="match status" value="1"/>
</dbReference>
<dbReference type="Gene3D" id="3.40.50.150">
    <property type="entry name" value="Vaccinia Virus protein VP39"/>
    <property type="match status" value="1"/>
</dbReference>
<dbReference type="HAMAP" id="MF_00607">
    <property type="entry name" value="16SrRNA_methyltr_A"/>
    <property type="match status" value="1"/>
</dbReference>
<dbReference type="InterPro" id="IPR001737">
    <property type="entry name" value="KsgA/Erm"/>
</dbReference>
<dbReference type="InterPro" id="IPR023165">
    <property type="entry name" value="rRNA_Ade_diMease-like_C"/>
</dbReference>
<dbReference type="InterPro" id="IPR020596">
    <property type="entry name" value="rRNA_Ade_Mease_Trfase_CS"/>
</dbReference>
<dbReference type="InterPro" id="IPR020598">
    <property type="entry name" value="rRNA_Ade_methylase_Trfase_N"/>
</dbReference>
<dbReference type="InterPro" id="IPR011530">
    <property type="entry name" value="rRNA_adenine_dimethylase"/>
</dbReference>
<dbReference type="InterPro" id="IPR029063">
    <property type="entry name" value="SAM-dependent_MTases_sf"/>
</dbReference>
<dbReference type="NCBIfam" id="TIGR00755">
    <property type="entry name" value="ksgA"/>
    <property type="match status" value="1"/>
</dbReference>
<dbReference type="PANTHER" id="PTHR11727">
    <property type="entry name" value="DIMETHYLADENOSINE TRANSFERASE"/>
    <property type="match status" value="1"/>
</dbReference>
<dbReference type="PANTHER" id="PTHR11727:SF7">
    <property type="entry name" value="DIMETHYLADENOSINE TRANSFERASE-RELATED"/>
    <property type="match status" value="1"/>
</dbReference>
<dbReference type="Pfam" id="PF00398">
    <property type="entry name" value="RrnaAD"/>
    <property type="match status" value="1"/>
</dbReference>
<dbReference type="SMART" id="SM00650">
    <property type="entry name" value="rADc"/>
    <property type="match status" value="1"/>
</dbReference>
<dbReference type="SUPFAM" id="SSF53335">
    <property type="entry name" value="S-adenosyl-L-methionine-dependent methyltransferases"/>
    <property type="match status" value="1"/>
</dbReference>
<dbReference type="PROSITE" id="PS01131">
    <property type="entry name" value="RRNA_A_DIMETH"/>
    <property type="match status" value="1"/>
</dbReference>
<dbReference type="PROSITE" id="PS51689">
    <property type="entry name" value="SAM_RNA_A_N6_MT"/>
    <property type="match status" value="1"/>
</dbReference>